<organism evidence="8 9">
    <name type="scientific">Schistosoma mansoni</name>
    <name type="common">Blood fluke</name>
    <dbReference type="NCBI Taxonomy" id="6183"/>
    <lineage>
        <taxon>Eukaryota</taxon>
        <taxon>Metazoa</taxon>
        <taxon>Spiralia</taxon>
        <taxon>Lophotrochozoa</taxon>
        <taxon>Platyhelminthes</taxon>
        <taxon>Trematoda</taxon>
        <taxon>Digenea</taxon>
        <taxon>Strigeidida</taxon>
        <taxon>Schistosomatoidea</taxon>
        <taxon>Schistosomatidae</taxon>
        <taxon>Schistosoma</taxon>
    </lineage>
</organism>
<dbReference type="EC" id="2.7.4.6" evidence="2 3"/>
<dbReference type="EMBL" id="HE601628">
    <property type="status" value="NOT_ANNOTATED_CDS"/>
    <property type="molecule type" value="Genomic_DNA"/>
</dbReference>
<dbReference type="PDB" id="5IOL">
    <property type="method" value="X-ray"/>
    <property type="resolution" value="1.74 A"/>
    <property type="chains" value="A/B/C/D/E/F/G/H/I/J/K/L=1-143"/>
</dbReference>
<dbReference type="PDB" id="5IOM">
    <property type="method" value="X-ray"/>
    <property type="resolution" value="1.90 A"/>
    <property type="chains" value="A/B=1-143"/>
</dbReference>
<dbReference type="PDB" id="5KK8">
    <property type="method" value="X-ray"/>
    <property type="resolution" value="2.11 A"/>
    <property type="chains" value="A/B=1-143"/>
</dbReference>
<dbReference type="PDBsum" id="5IOL"/>
<dbReference type="PDBsum" id="5IOM"/>
<dbReference type="PDBsum" id="5KK8"/>
<dbReference type="SMR" id="A0A3Q0KJ78"/>
<dbReference type="FunCoup" id="A0A3Q0KJ78">
    <property type="interactions" value="1395"/>
</dbReference>
<dbReference type="STRING" id="6183.A0A3Q0KJ78"/>
<dbReference type="EnsemblMetazoa" id="Smp_092750.1">
    <property type="protein sequence ID" value="Smp_092750.1"/>
    <property type="gene ID" value="Smp_092750"/>
</dbReference>
<dbReference type="WBParaSite" id="Smp_092750.1">
    <property type="protein sequence ID" value="Smp_092750.1"/>
    <property type="gene ID" value="Smp_092750"/>
</dbReference>
<dbReference type="InParanoid" id="A0A3Q0KJ78"/>
<dbReference type="UniPathway" id="UPA00488"/>
<dbReference type="Proteomes" id="UP000008854">
    <property type="component" value="Unassembled WGS sequence"/>
</dbReference>
<dbReference type="ExpressionAtlas" id="A0A3Q0KJ78">
    <property type="expression patterns" value="baseline"/>
</dbReference>
<dbReference type="GO" id="GO:0043531">
    <property type="term" value="F:ADP binding"/>
    <property type="evidence" value="ECO:0000314"/>
    <property type="project" value="UniProtKB"/>
</dbReference>
<dbReference type="GO" id="GO:0005524">
    <property type="term" value="F:ATP binding"/>
    <property type="evidence" value="ECO:0000250"/>
    <property type="project" value="UniProtKB"/>
</dbReference>
<dbReference type="GO" id="GO:0042802">
    <property type="term" value="F:identical protein binding"/>
    <property type="evidence" value="ECO:0000314"/>
    <property type="project" value="UniProtKB"/>
</dbReference>
<dbReference type="GO" id="GO:0004550">
    <property type="term" value="F:nucleoside diphosphate kinase activity"/>
    <property type="evidence" value="ECO:0000314"/>
    <property type="project" value="UniProtKB"/>
</dbReference>
<dbReference type="GO" id="GO:0006241">
    <property type="term" value="P:CTP biosynthetic process"/>
    <property type="evidence" value="ECO:0007669"/>
    <property type="project" value="InterPro"/>
</dbReference>
<dbReference type="GO" id="GO:0009202">
    <property type="term" value="P:deoxyribonucleoside triphosphate biosynthetic process"/>
    <property type="evidence" value="ECO:0000250"/>
    <property type="project" value="UniProtKB"/>
</dbReference>
<dbReference type="GO" id="GO:0006183">
    <property type="term" value="P:GTP biosynthetic process"/>
    <property type="evidence" value="ECO:0000314"/>
    <property type="project" value="UniProtKB"/>
</dbReference>
<dbReference type="GO" id="GO:0034214">
    <property type="term" value="P:protein hexamerization"/>
    <property type="evidence" value="ECO:0000314"/>
    <property type="project" value="UniProtKB"/>
</dbReference>
<dbReference type="GO" id="GO:0032261">
    <property type="term" value="P:purine nucleotide salvage"/>
    <property type="evidence" value="ECO:0000314"/>
    <property type="project" value="UniProtKB"/>
</dbReference>
<dbReference type="GO" id="GO:0006166">
    <property type="term" value="P:purine ribonucleoside salvage"/>
    <property type="evidence" value="ECO:0007669"/>
    <property type="project" value="UniProtKB-KW"/>
</dbReference>
<dbReference type="GO" id="GO:0006228">
    <property type="term" value="P:UTP biosynthetic process"/>
    <property type="evidence" value="ECO:0007669"/>
    <property type="project" value="InterPro"/>
</dbReference>
<dbReference type="CDD" id="cd04413">
    <property type="entry name" value="NDPk_I"/>
    <property type="match status" value="1"/>
</dbReference>
<dbReference type="FunFam" id="3.30.70.141:FF:000002">
    <property type="entry name" value="Nucleoside diphosphate kinase"/>
    <property type="match status" value="1"/>
</dbReference>
<dbReference type="Gene3D" id="3.30.70.141">
    <property type="entry name" value="Nucleoside diphosphate kinase-like domain"/>
    <property type="match status" value="1"/>
</dbReference>
<dbReference type="InterPro" id="IPR034907">
    <property type="entry name" value="NDK-like_dom"/>
</dbReference>
<dbReference type="InterPro" id="IPR036850">
    <property type="entry name" value="NDK-like_dom_sf"/>
</dbReference>
<dbReference type="InterPro" id="IPR001564">
    <property type="entry name" value="Nucleoside_diP_kinase"/>
</dbReference>
<dbReference type="NCBIfam" id="NF001908">
    <property type="entry name" value="PRK00668.1"/>
    <property type="match status" value="1"/>
</dbReference>
<dbReference type="PANTHER" id="PTHR11349">
    <property type="entry name" value="NUCLEOSIDE DIPHOSPHATE KINASE"/>
    <property type="match status" value="1"/>
</dbReference>
<dbReference type="Pfam" id="PF00334">
    <property type="entry name" value="NDK"/>
    <property type="match status" value="1"/>
</dbReference>
<dbReference type="PRINTS" id="PR01243">
    <property type="entry name" value="NUCDPKINASE"/>
</dbReference>
<dbReference type="SMART" id="SM00562">
    <property type="entry name" value="NDK"/>
    <property type="match status" value="1"/>
</dbReference>
<dbReference type="SUPFAM" id="SSF54919">
    <property type="entry name" value="Nucleoside diphosphate kinase, NDK"/>
    <property type="match status" value="1"/>
</dbReference>
<dbReference type="PROSITE" id="PS51374">
    <property type="entry name" value="NDPK_LIKE"/>
    <property type="match status" value="1"/>
</dbReference>
<keyword id="KW-0002">3D-structure</keyword>
<keyword id="KW-0067">ATP-binding</keyword>
<keyword id="KW-0418">Kinase</keyword>
<keyword id="KW-0460">Magnesium</keyword>
<keyword id="KW-0545">Nucleotide biosynthesis</keyword>
<keyword id="KW-0547">Nucleotide-binding</keyword>
<keyword id="KW-0660">Purine salvage</keyword>
<keyword id="KW-1185">Reference proteome</keyword>
<keyword id="KW-0808">Transferase</keyword>
<feature type="chain" id="PRO_0000461287" description="Nucleoside diphosphate kinase">
    <location>
        <begin position="1"/>
        <end position="143"/>
    </location>
</feature>
<feature type="domain" description="NDPK-like" evidence="2">
    <location>
        <begin position="1"/>
        <end position="132"/>
    </location>
</feature>
<feature type="active site" description="Pros-phosphohistidine intermediate" evidence="2">
    <location>
        <position position="109"/>
    </location>
</feature>
<feature type="binding site" evidence="3 10">
    <location>
        <position position="3"/>
    </location>
    <ligand>
        <name>ADP</name>
        <dbReference type="ChEBI" id="CHEBI:456216"/>
    </ligand>
</feature>
<feature type="binding site" evidence="2">
    <location>
        <position position="3"/>
    </location>
    <ligand>
        <name>ATP</name>
        <dbReference type="ChEBI" id="CHEBI:30616"/>
    </ligand>
</feature>
<feature type="binding site" evidence="3 10">
    <location>
        <position position="51"/>
    </location>
    <ligand>
        <name>ADP</name>
        <dbReference type="ChEBI" id="CHEBI:456216"/>
    </ligand>
</feature>
<feature type="binding site" evidence="2">
    <location>
        <position position="51"/>
    </location>
    <ligand>
        <name>ATP</name>
        <dbReference type="ChEBI" id="CHEBI:30616"/>
    </ligand>
</feature>
<feature type="binding site" evidence="3 10">
    <location>
        <position position="79"/>
    </location>
    <ligand>
        <name>ADP</name>
        <dbReference type="ChEBI" id="CHEBI:456216"/>
    </ligand>
</feature>
<feature type="binding site" evidence="2">
    <location>
        <position position="79"/>
    </location>
    <ligand>
        <name>ATP</name>
        <dbReference type="ChEBI" id="CHEBI:30616"/>
    </ligand>
</feature>
<feature type="binding site" evidence="3 10">
    <location>
        <position position="85"/>
    </location>
    <ligand>
        <name>ADP</name>
        <dbReference type="ChEBI" id="CHEBI:456216"/>
    </ligand>
</feature>
<feature type="binding site" evidence="2">
    <location>
        <position position="85"/>
    </location>
    <ligand>
        <name>ATP</name>
        <dbReference type="ChEBI" id="CHEBI:30616"/>
    </ligand>
</feature>
<feature type="binding site" evidence="3 10">
    <location>
        <position position="96"/>
    </location>
    <ligand>
        <name>ADP</name>
        <dbReference type="ChEBI" id="CHEBI:456216"/>
    </ligand>
</feature>
<feature type="binding site" evidence="2">
    <location>
        <position position="96"/>
    </location>
    <ligand>
        <name>ATP</name>
        <dbReference type="ChEBI" id="CHEBI:30616"/>
    </ligand>
</feature>
<feature type="binding site" evidence="3 10">
    <location>
        <position position="103"/>
    </location>
    <ligand>
        <name>ADP</name>
        <dbReference type="ChEBI" id="CHEBI:456216"/>
    </ligand>
</feature>
<feature type="binding site" evidence="3 10">
    <location>
        <position position="106"/>
    </location>
    <ligand>
        <name>ADP</name>
        <dbReference type="ChEBI" id="CHEBI:456216"/>
    </ligand>
</feature>
<feature type="binding site" evidence="2">
    <location>
        <position position="106"/>
    </location>
    <ligand>
        <name>ATP</name>
        <dbReference type="ChEBI" id="CHEBI:30616"/>
    </ligand>
</feature>
<feature type="helix" evidence="11">
    <location>
        <begin position="4"/>
        <end position="8"/>
    </location>
</feature>
<feature type="helix" evidence="11">
    <location>
        <begin position="12"/>
        <end position="21"/>
    </location>
</feature>
<feature type="strand" evidence="11">
    <location>
        <begin position="25"/>
        <end position="30"/>
    </location>
</feature>
<feature type="helix" evidence="11">
    <location>
        <begin position="36"/>
        <end position="42"/>
    </location>
</feature>
<feature type="helix" evidence="11">
    <location>
        <begin position="44"/>
        <end position="46"/>
    </location>
</feature>
<feature type="helix" evidence="11">
    <location>
        <begin position="52"/>
        <end position="59"/>
    </location>
</feature>
<feature type="strand" evidence="11">
    <location>
        <begin position="64"/>
        <end position="71"/>
    </location>
</feature>
<feature type="helix" evidence="11">
    <location>
        <begin position="74"/>
        <end position="82"/>
    </location>
</feature>
<feature type="helix" evidence="11">
    <location>
        <begin position="87"/>
        <end position="89"/>
    </location>
</feature>
<feature type="helix" evidence="11">
    <location>
        <begin position="95"/>
        <end position="99"/>
    </location>
</feature>
<feature type="strand" evidence="11">
    <location>
        <begin position="107"/>
        <end position="110"/>
    </location>
</feature>
<feature type="helix" evidence="11">
    <location>
        <begin position="114"/>
        <end position="124"/>
    </location>
</feature>
<feature type="helix" evidence="11">
    <location>
        <begin position="127"/>
        <end position="129"/>
    </location>
</feature>
<feature type="helix" evidence="11">
    <location>
        <begin position="138"/>
        <end position="141"/>
    </location>
</feature>
<sequence>MVKPDGVQRGLVGEVIQRFERRGYKLVAIKMMHASEQLLQTHYEALKSLSFFPKLVAYMSSGPVVPMVFEGRKVVENGRTMLGATKPEASCPGSIRGDYCQDVGRNVVHGSDSTESANREINLWFSPQELCQYKQAVDPWIHE</sequence>
<comment type="function">
    <text evidence="1">Major role in the synthesis of nucleoside triphosphates other than ATP. The ATP gamma phosphate is transferred to the NDP beta phosphate via a ping-pong mechanism, using a phosphorylated active-site intermediate.</text>
</comment>
<comment type="catalytic activity">
    <reaction evidence="2">
        <text>a 2'-deoxyribonucleoside 5'-diphosphate + ATP = a 2'-deoxyribonucleoside 5'-triphosphate + ADP</text>
        <dbReference type="Rhea" id="RHEA:44640"/>
        <dbReference type="ChEBI" id="CHEBI:30616"/>
        <dbReference type="ChEBI" id="CHEBI:61560"/>
        <dbReference type="ChEBI" id="CHEBI:73316"/>
        <dbReference type="ChEBI" id="CHEBI:456216"/>
        <dbReference type="EC" id="2.7.4.6"/>
    </reaction>
</comment>
<comment type="catalytic activity">
    <reaction evidence="2">
        <text>a ribonucleoside 5'-diphosphate + ATP = a ribonucleoside 5'-triphosphate + ADP</text>
        <dbReference type="Rhea" id="RHEA:18113"/>
        <dbReference type="ChEBI" id="CHEBI:30616"/>
        <dbReference type="ChEBI" id="CHEBI:57930"/>
        <dbReference type="ChEBI" id="CHEBI:61557"/>
        <dbReference type="ChEBI" id="CHEBI:456216"/>
        <dbReference type="EC" id="2.7.4.6"/>
    </reaction>
</comment>
<comment type="catalytic activity">
    <reaction evidence="3">
        <text>GDP + ATP = GTP + ADP</text>
        <dbReference type="Rhea" id="RHEA:27686"/>
        <dbReference type="ChEBI" id="CHEBI:30616"/>
        <dbReference type="ChEBI" id="CHEBI:37565"/>
        <dbReference type="ChEBI" id="CHEBI:58189"/>
        <dbReference type="ChEBI" id="CHEBI:456216"/>
        <dbReference type="EC" id="2.7.4.6"/>
    </reaction>
</comment>
<comment type="cofactor">
    <cofactor evidence="2">
        <name>Mg(2+)</name>
        <dbReference type="ChEBI" id="CHEBI:18420"/>
    </cofactor>
</comment>
<comment type="biophysicochemical properties">
    <kinetics>
        <KM evidence="3">36.3 uM for GDP (at pH 7.6)</KM>
        <text evidence="3">kcat is 0.68 sec(-1) with GDP as substrate.</text>
    </kinetics>
</comment>
<comment type="pathway">
    <text evidence="6 7">Purine metabolism; purine nucleotide biosynthesis.</text>
</comment>
<comment type="subunit">
    <text evidence="3">Homohexamer.</text>
</comment>
<comment type="biotechnology">
    <text evidence="7">May be a potential antigenic target for vaccine formulation against schistosomiasis.</text>
</comment>
<comment type="miscellaneous">
    <text evidence="6 7">Schistosomes do not have de novo purine biosynthetic pathway, hence they depend solely on purine salvage pathway to supply for their need for purines.</text>
</comment>
<comment type="similarity">
    <text evidence="2">Belongs to the NDK family.</text>
</comment>
<proteinExistence type="evidence at protein level"/>
<evidence type="ECO:0000250" key="1">
    <source>
        <dbReference type="UniProtKB" id="P08879"/>
    </source>
</evidence>
<evidence type="ECO:0000255" key="2">
    <source>
        <dbReference type="PROSITE-ProRule" id="PRU00706"/>
    </source>
</evidence>
<evidence type="ECO:0000269" key="3">
    <source>
    </source>
</evidence>
<evidence type="ECO:0000303" key="4">
    <source>
    </source>
</evidence>
<evidence type="ECO:0000303" key="5">
    <source>
    </source>
</evidence>
<evidence type="ECO:0000305" key="6">
    <source>
    </source>
</evidence>
<evidence type="ECO:0000305" key="7">
    <source>
    </source>
</evidence>
<evidence type="ECO:0000312" key="8">
    <source>
        <dbReference type="Proteomes" id="UP000008854"/>
    </source>
</evidence>
<evidence type="ECO:0000312" key="9">
    <source>
        <dbReference type="WBParaSite" id="Smp_092750.1"/>
    </source>
</evidence>
<evidence type="ECO:0007744" key="10">
    <source>
        <dbReference type="PDB" id="5KK8"/>
    </source>
</evidence>
<evidence type="ECO:0007829" key="11">
    <source>
        <dbReference type="PDB" id="5IOL"/>
    </source>
</evidence>
<protein>
    <recommendedName>
        <fullName evidence="2 4 5">Nucleoside diphosphate kinase</fullName>
        <shortName evidence="2">NDK</shortName>
        <shortName evidence="2">NDP kinase</shortName>
        <shortName evidence="4 5">NDPK</shortName>
        <ecNumber evidence="2 3">2.7.4.6</ecNumber>
    </recommendedName>
    <alternativeName>
        <fullName evidence="4">SmNDPK</fullName>
    </alternativeName>
</protein>
<reference evidence="8" key="1">
    <citation type="journal article" date="2012" name="PLoS Negl. Trop. Dis.">
        <title>A systematically improved high quality genome and transcriptome of the human blood fluke Schistosoma mansoni.</title>
        <authorList>
            <person name="Protasio A.V."/>
            <person name="Tsai I.J."/>
            <person name="Babbage A."/>
            <person name="Nichol S."/>
            <person name="Hunt M."/>
            <person name="Aslett M.A."/>
            <person name="De Silva N."/>
            <person name="Velarde G.S."/>
            <person name="Anderson T.J."/>
            <person name="Clark R.C."/>
            <person name="Davidson C."/>
            <person name="Dillon G.P."/>
            <person name="Holroyd N.E."/>
            <person name="LoVerde P.T."/>
            <person name="Lloyd C."/>
            <person name="McQuillan J."/>
            <person name="Oliveira G."/>
            <person name="Otto T.D."/>
            <person name="Parker-Manuel S.J."/>
            <person name="Quail M.A."/>
            <person name="Wilson R.A."/>
            <person name="Zerlotini A."/>
            <person name="Dunne D.W."/>
            <person name="Berriman M."/>
        </authorList>
    </citation>
    <scope>NUCLEOTIDE SEQUENCE [LARGE SCALE GENOMIC DNA]</scope>
    <source>
        <strain evidence="8">Puerto Rican</strain>
    </source>
</reference>
<reference key="2">
    <citation type="journal article" date="2020" name="Front. Immunol.">
        <title>Investigating Immunization With Nucleotide Enzymes of Schistosoma mansoni: Nucleoside Diphosphate Kinase and Adenylosuccinate Lyase as New Antigenic Targets Against Schistosomiasis.</title>
        <authorList>
            <person name="Cagnazzo T.D.O."/>
            <person name="Nogueira C.T."/>
            <person name="de Castro C.A."/>
            <person name="Neris D.M."/>
            <person name="Fattori A.C.M."/>
            <person name="Correia R.O."/>
            <person name="Albuquerque Y.R."/>
            <person name="Fragelli B.D.L."/>
            <person name="Mendes T.M.F."/>
            <person name="Allegretti S.M."/>
            <person name="Soares E.G."/>
            <person name="Romanello L."/>
            <person name="Torini J.R."/>
            <person name="Pereira H.D."/>
            <person name="Anibal F.F."/>
        </authorList>
    </citation>
    <scope>PATHWAY</scope>
    <scope>BIOTECHNOLOGY</scope>
    <source>
        <strain evidence="5">Puerto Rican</strain>
    </source>
</reference>
<reference key="3">
    <citation type="journal article" date="2019" name="Mol. Biochem. Parasitol.">
        <title>Characterization of a Schistosoma mansoni NDPK expressed in sexual and digestive organs.</title>
        <authorList>
            <person name="Torini J.R."/>
            <person name="de Freitas Fernandes A."/>
            <person name="Balasco Serrao V.H."/>
            <person name="Romanello L."/>
            <person name="Bird L.E."/>
            <person name="Nettleship J.E."/>
            <person name="Owens R.J."/>
            <person name="Brandao-Neto J."/>
            <person name="Zeraik A.E."/>
            <person name="DeMarco R."/>
            <person name="D'Muniz Pereira H."/>
        </authorList>
    </citation>
    <scope>X-RAY CRYSTALLOGRAPHY (1.74 ANGSTROMS) AND IN COMPLEX WITH ADP</scope>
    <scope>CATALYTIC ACTIVITY</scope>
    <scope>BIOPHYSICOCHEMICAL PROPERTIES</scope>
    <scope>PATHWAY</scope>
    <scope>SUBUNIT</scope>
</reference>
<accession>A0A3Q0KJ78</accession>
<name>NDK_SCHMA</name>
<gene>
    <name evidence="4 5" type="ORF">Smp_092750</name>
</gene>